<name>PYRB_CHLL3</name>
<keyword id="KW-0665">Pyrimidine biosynthesis</keyword>
<keyword id="KW-1185">Reference proteome</keyword>
<keyword id="KW-0808">Transferase</keyword>
<feature type="chain" id="PRO_0000329111" description="Aspartate carbamoyltransferase catalytic subunit">
    <location>
        <begin position="1"/>
        <end position="313"/>
    </location>
</feature>
<feature type="binding site" evidence="1">
    <location>
        <position position="58"/>
    </location>
    <ligand>
        <name>carbamoyl phosphate</name>
        <dbReference type="ChEBI" id="CHEBI:58228"/>
    </ligand>
</feature>
<feature type="binding site" evidence="1">
    <location>
        <position position="59"/>
    </location>
    <ligand>
        <name>carbamoyl phosphate</name>
        <dbReference type="ChEBI" id="CHEBI:58228"/>
    </ligand>
</feature>
<feature type="binding site" evidence="1">
    <location>
        <position position="86"/>
    </location>
    <ligand>
        <name>L-aspartate</name>
        <dbReference type="ChEBI" id="CHEBI:29991"/>
    </ligand>
</feature>
<feature type="binding site" evidence="1">
    <location>
        <position position="108"/>
    </location>
    <ligand>
        <name>carbamoyl phosphate</name>
        <dbReference type="ChEBI" id="CHEBI:58228"/>
    </ligand>
</feature>
<feature type="binding site" evidence="1">
    <location>
        <position position="136"/>
    </location>
    <ligand>
        <name>carbamoyl phosphate</name>
        <dbReference type="ChEBI" id="CHEBI:58228"/>
    </ligand>
</feature>
<feature type="binding site" evidence="1">
    <location>
        <position position="139"/>
    </location>
    <ligand>
        <name>carbamoyl phosphate</name>
        <dbReference type="ChEBI" id="CHEBI:58228"/>
    </ligand>
</feature>
<feature type="binding site" evidence="1">
    <location>
        <position position="169"/>
    </location>
    <ligand>
        <name>L-aspartate</name>
        <dbReference type="ChEBI" id="CHEBI:29991"/>
    </ligand>
</feature>
<feature type="binding site" evidence="1">
    <location>
        <position position="223"/>
    </location>
    <ligand>
        <name>L-aspartate</name>
        <dbReference type="ChEBI" id="CHEBI:29991"/>
    </ligand>
</feature>
<feature type="binding site" evidence="1">
    <location>
        <position position="264"/>
    </location>
    <ligand>
        <name>carbamoyl phosphate</name>
        <dbReference type="ChEBI" id="CHEBI:58228"/>
    </ligand>
</feature>
<feature type="binding site" evidence="1">
    <location>
        <position position="265"/>
    </location>
    <ligand>
        <name>carbamoyl phosphate</name>
        <dbReference type="ChEBI" id="CHEBI:58228"/>
    </ligand>
</feature>
<reference key="1">
    <citation type="submission" date="2005-08" db="EMBL/GenBank/DDBJ databases">
        <title>Complete sequence of Pelodictyon luteolum DSM 273.</title>
        <authorList>
            <consortium name="US DOE Joint Genome Institute"/>
            <person name="Copeland A."/>
            <person name="Lucas S."/>
            <person name="Lapidus A."/>
            <person name="Barry K."/>
            <person name="Detter J.C."/>
            <person name="Glavina T."/>
            <person name="Hammon N."/>
            <person name="Israni S."/>
            <person name="Pitluck S."/>
            <person name="Bryant D."/>
            <person name="Schmutz J."/>
            <person name="Larimer F."/>
            <person name="Land M."/>
            <person name="Kyrpides N."/>
            <person name="Ivanova N."/>
            <person name="Richardson P."/>
        </authorList>
    </citation>
    <scope>NUCLEOTIDE SEQUENCE [LARGE SCALE GENOMIC DNA]</scope>
    <source>
        <strain>DSM 273 / BCRC 81028 / 2530</strain>
    </source>
</reference>
<protein>
    <recommendedName>
        <fullName evidence="1">Aspartate carbamoyltransferase catalytic subunit</fullName>
        <ecNumber evidence="1">2.1.3.2</ecNumber>
    </recommendedName>
    <alternativeName>
        <fullName evidence="1">Aspartate transcarbamylase</fullName>
        <shortName evidence="1">ATCase</shortName>
    </alternativeName>
</protein>
<evidence type="ECO:0000255" key="1">
    <source>
        <dbReference type="HAMAP-Rule" id="MF_00001"/>
    </source>
</evidence>
<evidence type="ECO:0000305" key="2"/>
<dbReference type="EC" id="2.1.3.2" evidence="1"/>
<dbReference type="EMBL" id="CP000096">
    <property type="protein sequence ID" value="ABB23380.1"/>
    <property type="status" value="ALT_INIT"/>
    <property type="molecule type" value="Genomic_DNA"/>
</dbReference>
<dbReference type="SMR" id="Q3B5K1"/>
<dbReference type="STRING" id="319225.Plut_0492"/>
<dbReference type="KEGG" id="plt:Plut_0492"/>
<dbReference type="eggNOG" id="COG0540">
    <property type="taxonomic scope" value="Bacteria"/>
</dbReference>
<dbReference type="HOGENOM" id="CLU_043846_2_0_10"/>
<dbReference type="UniPathway" id="UPA00070">
    <property type="reaction ID" value="UER00116"/>
</dbReference>
<dbReference type="Proteomes" id="UP000002709">
    <property type="component" value="Chromosome"/>
</dbReference>
<dbReference type="GO" id="GO:0005829">
    <property type="term" value="C:cytosol"/>
    <property type="evidence" value="ECO:0007669"/>
    <property type="project" value="TreeGrafter"/>
</dbReference>
<dbReference type="GO" id="GO:0016597">
    <property type="term" value="F:amino acid binding"/>
    <property type="evidence" value="ECO:0007669"/>
    <property type="project" value="InterPro"/>
</dbReference>
<dbReference type="GO" id="GO:0004070">
    <property type="term" value="F:aspartate carbamoyltransferase activity"/>
    <property type="evidence" value="ECO:0007669"/>
    <property type="project" value="UniProtKB-UniRule"/>
</dbReference>
<dbReference type="GO" id="GO:0006207">
    <property type="term" value="P:'de novo' pyrimidine nucleobase biosynthetic process"/>
    <property type="evidence" value="ECO:0007669"/>
    <property type="project" value="InterPro"/>
</dbReference>
<dbReference type="GO" id="GO:0044205">
    <property type="term" value="P:'de novo' UMP biosynthetic process"/>
    <property type="evidence" value="ECO:0007669"/>
    <property type="project" value="UniProtKB-UniRule"/>
</dbReference>
<dbReference type="GO" id="GO:0006520">
    <property type="term" value="P:amino acid metabolic process"/>
    <property type="evidence" value="ECO:0007669"/>
    <property type="project" value="InterPro"/>
</dbReference>
<dbReference type="Gene3D" id="3.40.50.1370">
    <property type="entry name" value="Aspartate/ornithine carbamoyltransferase"/>
    <property type="match status" value="2"/>
</dbReference>
<dbReference type="HAMAP" id="MF_00001">
    <property type="entry name" value="Asp_carb_tr"/>
    <property type="match status" value="1"/>
</dbReference>
<dbReference type="InterPro" id="IPR006132">
    <property type="entry name" value="Asp/Orn_carbamoyltranf_P-bd"/>
</dbReference>
<dbReference type="InterPro" id="IPR006130">
    <property type="entry name" value="Asp/Orn_carbamoylTrfase"/>
</dbReference>
<dbReference type="InterPro" id="IPR036901">
    <property type="entry name" value="Asp/Orn_carbamoylTrfase_sf"/>
</dbReference>
<dbReference type="InterPro" id="IPR002082">
    <property type="entry name" value="Asp_carbamoyltransf"/>
</dbReference>
<dbReference type="InterPro" id="IPR006131">
    <property type="entry name" value="Asp_carbamoyltransf_Asp/Orn-bd"/>
</dbReference>
<dbReference type="NCBIfam" id="TIGR00670">
    <property type="entry name" value="asp_carb_tr"/>
    <property type="match status" value="1"/>
</dbReference>
<dbReference type="NCBIfam" id="NF002032">
    <property type="entry name" value="PRK00856.1"/>
    <property type="match status" value="1"/>
</dbReference>
<dbReference type="PANTHER" id="PTHR45753:SF6">
    <property type="entry name" value="ASPARTATE CARBAMOYLTRANSFERASE"/>
    <property type="match status" value="1"/>
</dbReference>
<dbReference type="PANTHER" id="PTHR45753">
    <property type="entry name" value="ORNITHINE CARBAMOYLTRANSFERASE, MITOCHONDRIAL"/>
    <property type="match status" value="1"/>
</dbReference>
<dbReference type="Pfam" id="PF00185">
    <property type="entry name" value="OTCace"/>
    <property type="match status" value="1"/>
</dbReference>
<dbReference type="Pfam" id="PF02729">
    <property type="entry name" value="OTCace_N"/>
    <property type="match status" value="1"/>
</dbReference>
<dbReference type="PRINTS" id="PR00100">
    <property type="entry name" value="AOTCASE"/>
</dbReference>
<dbReference type="PRINTS" id="PR00101">
    <property type="entry name" value="ATCASE"/>
</dbReference>
<dbReference type="SUPFAM" id="SSF53671">
    <property type="entry name" value="Aspartate/ornithine carbamoyltransferase"/>
    <property type="match status" value="1"/>
</dbReference>
<dbReference type="PROSITE" id="PS00097">
    <property type="entry name" value="CARBAMOYLTRANSFERASE"/>
    <property type="match status" value="1"/>
</dbReference>
<sequence>MAALQHLTGLCGMSAGTLSGLLDKTEGFKKELTAPAPSFSPSLQGRRIALVFFENSTRTRFSFELAARNLGASTLGFSASTSSVTKGETLSDTIKNLEAMQVDAFVLRHPSSGSAEFISGITKKPVVNAGDGANEHPTQALLDMFTLREHFGTLKAIKVAIIGDVLHSRVARSNIHGLLTMGAEVGLCSPVTLLPPDSEKLGVSLFTDLDQALGWADAALVLRLQLERATGGYLPSLQEYSVHYGLTDERLERTARHLLVLHPGPINREIEISNRVADRIQPPGYSKSMLLEQVTNGVAVRMAVLQTLLADTP</sequence>
<comment type="function">
    <text evidence="1">Catalyzes the condensation of carbamoyl phosphate and aspartate to form carbamoyl aspartate and inorganic phosphate, the committed step in the de novo pyrimidine nucleotide biosynthesis pathway.</text>
</comment>
<comment type="catalytic activity">
    <reaction evidence="1">
        <text>carbamoyl phosphate + L-aspartate = N-carbamoyl-L-aspartate + phosphate + H(+)</text>
        <dbReference type="Rhea" id="RHEA:20013"/>
        <dbReference type="ChEBI" id="CHEBI:15378"/>
        <dbReference type="ChEBI" id="CHEBI:29991"/>
        <dbReference type="ChEBI" id="CHEBI:32814"/>
        <dbReference type="ChEBI" id="CHEBI:43474"/>
        <dbReference type="ChEBI" id="CHEBI:58228"/>
        <dbReference type="EC" id="2.1.3.2"/>
    </reaction>
</comment>
<comment type="pathway">
    <text evidence="1">Pyrimidine metabolism; UMP biosynthesis via de novo pathway; (S)-dihydroorotate from bicarbonate: step 2/3.</text>
</comment>
<comment type="subunit">
    <text evidence="1">Heterododecamer (2C3:3R2) of six catalytic PyrB chains organized as two trimers (C3), and six regulatory PyrI chains organized as three dimers (R2).</text>
</comment>
<comment type="similarity">
    <text evidence="1">Belongs to the aspartate/ornithine carbamoyltransferase superfamily. ATCase family.</text>
</comment>
<comment type="sequence caution" evidence="2">
    <conflict type="erroneous initiation">
        <sequence resource="EMBL-CDS" id="ABB23380"/>
    </conflict>
</comment>
<accession>Q3B5K1</accession>
<gene>
    <name evidence="1" type="primary">pyrB</name>
    <name type="ordered locus">Plut_0492</name>
</gene>
<proteinExistence type="inferred from homology"/>
<organism>
    <name type="scientific">Chlorobium luteolum (strain DSM 273 / BCRC 81028 / 2530)</name>
    <name type="common">Pelodictyon luteolum</name>
    <dbReference type="NCBI Taxonomy" id="319225"/>
    <lineage>
        <taxon>Bacteria</taxon>
        <taxon>Pseudomonadati</taxon>
        <taxon>Chlorobiota</taxon>
        <taxon>Chlorobiia</taxon>
        <taxon>Chlorobiales</taxon>
        <taxon>Chlorobiaceae</taxon>
        <taxon>Chlorobium/Pelodictyon group</taxon>
        <taxon>Pelodictyon</taxon>
    </lineage>
</organism>